<proteinExistence type="inferred from homology"/>
<dbReference type="EMBL" id="AP009049">
    <property type="protein sequence ID" value="BAH05829.1"/>
    <property type="molecule type" value="Genomic_DNA"/>
</dbReference>
<dbReference type="RefSeq" id="WP_012101243.1">
    <property type="nucleotide sequence ID" value="NC_011837.1"/>
</dbReference>
<dbReference type="SMR" id="B9E004"/>
<dbReference type="KEGG" id="ckr:CKR_0778"/>
<dbReference type="HOGENOM" id="CLU_073529_0_2_9"/>
<dbReference type="Proteomes" id="UP000007969">
    <property type="component" value="Chromosome"/>
</dbReference>
<dbReference type="GO" id="GO:0046872">
    <property type="term" value="F:metal ion binding"/>
    <property type="evidence" value="ECO:0007669"/>
    <property type="project" value="UniProtKB-KW"/>
</dbReference>
<dbReference type="GO" id="GO:0008237">
    <property type="term" value="F:metallopeptidase activity"/>
    <property type="evidence" value="ECO:0007669"/>
    <property type="project" value="UniProtKB-KW"/>
</dbReference>
<dbReference type="GO" id="GO:0006508">
    <property type="term" value="P:proteolysis"/>
    <property type="evidence" value="ECO:0007669"/>
    <property type="project" value="UniProtKB-KW"/>
</dbReference>
<dbReference type="CDD" id="cd08071">
    <property type="entry name" value="MPN_DUF2466"/>
    <property type="match status" value="1"/>
</dbReference>
<dbReference type="Gene3D" id="3.40.140.10">
    <property type="entry name" value="Cytidine Deaminase, domain 2"/>
    <property type="match status" value="1"/>
</dbReference>
<dbReference type="InterPro" id="IPR037518">
    <property type="entry name" value="MPN"/>
</dbReference>
<dbReference type="InterPro" id="IPR025657">
    <property type="entry name" value="RadC_JAB"/>
</dbReference>
<dbReference type="InterPro" id="IPR010994">
    <property type="entry name" value="RuvA_2-like"/>
</dbReference>
<dbReference type="InterPro" id="IPR001405">
    <property type="entry name" value="UPF0758"/>
</dbReference>
<dbReference type="InterPro" id="IPR020891">
    <property type="entry name" value="UPF0758_CS"/>
</dbReference>
<dbReference type="InterPro" id="IPR046778">
    <property type="entry name" value="UPF0758_N"/>
</dbReference>
<dbReference type="NCBIfam" id="NF000642">
    <property type="entry name" value="PRK00024.1"/>
    <property type="match status" value="1"/>
</dbReference>
<dbReference type="NCBIfam" id="TIGR00608">
    <property type="entry name" value="radc"/>
    <property type="match status" value="1"/>
</dbReference>
<dbReference type="PANTHER" id="PTHR30471">
    <property type="entry name" value="DNA REPAIR PROTEIN RADC"/>
    <property type="match status" value="1"/>
</dbReference>
<dbReference type="PANTHER" id="PTHR30471:SF3">
    <property type="entry name" value="UPF0758 PROTEIN YEES-RELATED"/>
    <property type="match status" value="1"/>
</dbReference>
<dbReference type="Pfam" id="PF04002">
    <property type="entry name" value="RadC"/>
    <property type="match status" value="1"/>
</dbReference>
<dbReference type="Pfam" id="PF20582">
    <property type="entry name" value="UPF0758_N"/>
    <property type="match status" value="1"/>
</dbReference>
<dbReference type="SUPFAM" id="SSF47781">
    <property type="entry name" value="RuvA domain 2-like"/>
    <property type="match status" value="1"/>
</dbReference>
<dbReference type="PROSITE" id="PS50249">
    <property type="entry name" value="MPN"/>
    <property type="match status" value="1"/>
</dbReference>
<dbReference type="PROSITE" id="PS01302">
    <property type="entry name" value="UPF0758"/>
    <property type="match status" value="1"/>
</dbReference>
<keyword id="KW-0378">Hydrolase</keyword>
<keyword id="KW-0479">Metal-binding</keyword>
<keyword id="KW-0482">Metalloprotease</keyword>
<keyword id="KW-0645">Protease</keyword>
<keyword id="KW-0862">Zinc</keyword>
<evidence type="ECO:0000255" key="1">
    <source>
        <dbReference type="PROSITE-ProRule" id="PRU01182"/>
    </source>
</evidence>
<evidence type="ECO:0000305" key="2"/>
<comment type="similarity">
    <text evidence="2">Belongs to the UPF0758 family.</text>
</comment>
<name>Y778_CLOK1</name>
<reference key="1">
    <citation type="submission" date="2005-09" db="EMBL/GenBank/DDBJ databases">
        <title>Complete genome sequence of Clostridium kluyveri and comparative genomics of Clostridia species.</title>
        <authorList>
            <person name="Inui M."/>
            <person name="Nonaka H."/>
            <person name="Shinoda Y."/>
            <person name="Ikenaga Y."/>
            <person name="Abe M."/>
            <person name="Naito K."/>
            <person name="Vertes A.A."/>
            <person name="Yukawa H."/>
        </authorList>
    </citation>
    <scope>NUCLEOTIDE SEQUENCE [LARGE SCALE GENOMIC DNA]</scope>
    <source>
        <strain>NBRC 12016</strain>
    </source>
</reference>
<protein>
    <recommendedName>
        <fullName>UPF0758 protein CKR_0778</fullName>
    </recommendedName>
</protein>
<sequence length="228" mass="25226">MKDNLKIMDLPKNERPRERLFRYGSEALSNSELLAVILGTGIKGENIVSLSNRIIKDNGGLNGIFNSDLEDFVSISGVGKAKAAKILAMAELSKRFKSYKDGDDYRICSPQDAAVLVMEEMRGMKQEHLKVILLNTKNMVIGIKNVFIGTLNSSIVHPREIFFYAIKKNSASIILCHNHPSGDPSPSNEDVNVTFRLKKCGELLGIQLVDHLIIGNGIFISLKEKGIL</sequence>
<gene>
    <name type="ordered locus">CKR_0778</name>
</gene>
<feature type="chain" id="PRO_1000195291" description="UPF0758 protein CKR_0778">
    <location>
        <begin position="1"/>
        <end position="228"/>
    </location>
</feature>
<feature type="domain" description="MPN" evidence="1">
    <location>
        <begin position="106"/>
        <end position="228"/>
    </location>
</feature>
<feature type="short sequence motif" description="JAMM motif" evidence="1">
    <location>
        <begin position="177"/>
        <end position="190"/>
    </location>
</feature>
<feature type="binding site" evidence="1">
    <location>
        <position position="177"/>
    </location>
    <ligand>
        <name>Zn(2+)</name>
        <dbReference type="ChEBI" id="CHEBI:29105"/>
        <note>catalytic</note>
    </ligand>
</feature>
<feature type="binding site" evidence="1">
    <location>
        <position position="179"/>
    </location>
    <ligand>
        <name>Zn(2+)</name>
        <dbReference type="ChEBI" id="CHEBI:29105"/>
        <note>catalytic</note>
    </ligand>
</feature>
<feature type="binding site" evidence="1">
    <location>
        <position position="190"/>
    </location>
    <ligand>
        <name>Zn(2+)</name>
        <dbReference type="ChEBI" id="CHEBI:29105"/>
        <note>catalytic</note>
    </ligand>
</feature>
<organism>
    <name type="scientific">Clostridium kluyveri (strain NBRC 12016)</name>
    <dbReference type="NCBI Taxonomy" id="583346"/>
    <lineage>
        <taxon>Bacteria</taxon>
        <taxon>Bacillati</taxon>
        <taxon>Bacillota</taxon>
        <taxon>Clostridia</taxon>
        <taxon>Eubacteriales</taxon>
        <taxon>Clostridiaceae</taxon>
        <taxon>Clostridium</taxon>
    </lineage>
</organism>
<accession>B9E004</accession>